<gene>
    <name evidence="1 3" type="primary">bpt</name>
    <name type="ordered locus">VV1_2124</name>
</gene>
<accession>Q8DAR7</accession>
<keyword id="KW-0012">Acyltransferase</keyword>
<keyword id="KW-0963">Cytoplasm</keyword>
<keyword id="KW-0808">Transferase</keyword>
<protein>
    <recommendedName>
        <fullName evidence="1 4">Aspartate/glutamate leucyltransferase</fullName>
        <ecNumber evidence="1 2">2.3.2.29</ecNumber>
    </recommendedName>
    <alternativeName>
        <fullName evidence="3">Bacterial protein transferase</fullName>
    </alternativeName>
</protein>
<proteinExistence type="evidence at protein level"/>
<reference key="1">
    <citation type="submission" date="2002-12" db="EMBL/GenBank/DDBJ databases">
        <title>Complete genome sequence of Vibrio vulnificus CMCP6.</title>
        <authorList>
            <person name="Rhee J.H."/>
            <person name="Kim S.Y."/>
            <person name="Chung S.S."/>
            <person name="Kim J.J."/>
            <person name="Moon Y.H."/>
            <person name="Jeong H."/>
            <person name="Choy H.E."/>
        </authorList>
    </citation>
    <scope>NUCLEOTIDE SEQUENCE [LARGE SCALE GENOMIC DNA]</scope>
    <source>
        <strain>CMCP6</strain>
    </source>
</reference>
<reference key="2">
    <citation type="submission" date="2006-04" db="EMBL/GenBank/DDBJ databases">
        <authorList>
            <person name="Rhee J.H."/>
            <person name="Kim S.Y."/>
            <person name="Chung S.S."/>
            <person name="Lee S.E."/>
            <person name="Choy H.E."/>
        </authorList>
    </citation>
    <scope>SEQUENCE REVISION</scope>
</reference>
<reference key="3">
    <citation type="journal article" date="2006" name="Proc. Natl. Acad. Sci. U.S.A.">
        <title>Aminoacyl-transferases and the N-end rule pathway of prokaryotic/eukaryotic specificity in a human pathogen.</title>
        <authorList>
            <person name="Graciet E."/>
            <person name="Hu R.G."/>
            <person name="Piatkov K."/>
            <person name="Rhee J.H."/>
            <person name="Schwarz E.M."/>
            <person name="Varshavsky A."/>
        </authorList>
    </citation>
    <scope>FUNCTION</scope>
    <scope>CATALYTIC ACTIVITY</scope>
    <scope>MUTAGENESIS OF CYS-18; TYR-58; TYR-170 AND TYR-205</scope>
</reference>
<dbReference type="EC" id="2.3.2.29" evidence="1 2"/>
<dbReference type="EMBL" id="AE016795">
    <property type="protein sequence ID" value="AAO10511.2"/>
    <property type="molecule type" value="Genomic_DNA"/>
</dbReference>
<dbReference type="RefSeq" id="WP_011080005.1">
    <property type="nucleotide sequence ID" value="NC_004459.3"/>
</dbReference>
<dbReference type="SMR" id="Q8DAR7"/>
<dbReference type="KEGG" id="vvu:VV1_2124"/>
<dbReference type="HOGENOM" id="CLU_077607_0_0_6"/>
<dbReference type="BioCyc" id="MetaCyc:MONOMER-19912"/>
<dbReference type="Proteomes" id="UP000002275">
    <property type="component" value="Chromosome 1"/>
</dbReference>
<dbReference type="GO" id="GO:0005737">
    <property type="term" value="C:cytoplasm"/>
    <property type="evidence" value="ECO:0007669"/>
    <property type="project" value="UniProtKB-SubCell"/>
</dbReference>
<dbReference type="GO" id="GO:0004057">
    <property type="term" value="F:arginyl-tRNA--protein transferase activity"/>
    <property type="evidence" value="ECO:0007669"/>
    <property type="project" value="InterPro"/>
</dbReference>
<dbReference type="GO" id="GO:0008914">
    <property type="term" value="F:leucyl-tRNA--protein transferase activity"/>
    <property type="evidence" value="ECO:0007669"/>
    <property type="project" value="UniProtKB-UniRule"/>
</dbReference>
<dbReference type="GO" id="GO:0071596">
    <property type="term" value="P:ubiquitin-dependent protein catabolic process via the N-end rule pathway"/>
    <property type="evidence" value="ECO:0007669"/>
    <property type="project" value="InterPro"/>
</dbReference>
<dbReference type="HAMAP" id="MF_00689">
    <property type="entry name" value="Bpt"/>
    <property type="match status" value="1"/>
</dbReference>
<dbReference type="InterPro" id="IPR016181">
    <property type="entry name" value="Acyl_CoA_acyltransferase"/>
</dbReference>
<dbReference type="InterPro" id="IPR017138">
    <property type="entry name" value="Asp_Glu_LeuTrfase"/>
</dbReference>
<dbReference type="InterPro" id="IPR030700">
    <property type="entry name" value="N-end_Aminoacyl_Trfase"/>
</dbReference>
<dbReference type="InterPro" id="IPR007472">
    <property type="entry name" value="N-end_Aminoacyl_Trfase_C"/>
</dbReference>
<dbReference type="InterPro" id="IPR007471">
    <property type="entry name" value="N-end_Aminoacyl_Trfase_N"/>
</dbReference>
<dbReference type="NCBIfam" id="NF002342">
    <property type="entry name" value="PRK01305.1-3"/>
    <property type="match status" value="1"/>
</dbReference>
<dbReference type="NCBIfam" id="NF002345">
    <property type="entry name" value="PRK01305.2-2"/>
    <property type="match status" value="1"/>
</dbReference>
<dbReference type="NCBIfam" id="NF002346">
    <property type="entry name" value="PRK01305.2-3"/>
    <property type="match status" value="1"/>
</dbReference>
<dbReference type="PANTHER" id="PTHR21367">
    <property type="entry name" value="ARGININE-TRNA-PROTEIN TRANSFERASE 1"/>
    <property type="match status" value="1"/>
</dbReference>
<dbReference type="PANTHER" id="PTHR21367:SF1">
    <property type="entry name" value="ARGINYL-TRNA--PROTEIN TRANSFERASE 1"/>
    <property type="match status" value="1"/>
</dbReference>
<dbReference type="Pfam" id="PF04377">
    <property type="entry name" value="ATE_C"/>
    <property type="match status" value="1"/>
</dbReference>
<dbReference type="Pfam" id="PF04376">
    <property type="entry name" value="ATE_N"/>
    <property type="match status" value="1"/>
</dbReference>
<dbReference type="PIRSF" id="PIRSF037208">
    <property type="entry name" value="ATE_pro_prd"/>
    <property type="match status" value="1"/>
</dbReference>
<dbReference type="SUPFAM" id="SSF55729">
    <property type="entry name" value="Acyl-CoA N-acyltransferases (Nat)"/>
    <property type="match status" value="1"/>
</dbReference>
<sequence length="232" mass="27378">MSSDIHQIKIGLTDNHPCSYLPERKERVAVALEADMHTADNYEVLLANGFRRSGNTIYKPHCDSCHSCQPIRISVPDIELSRSQKRLLAKARSLSWSMKRNMDENWFDLYSRYIVARHRNGTMYPPKKDDFAHFSRNQWLTTQFLHIYEGQRLIAVAVTDIMDHCASAFYTFFEPEHELSLGTLAVLFQLEFCQEEKKQWLYLGYQIDECPAMNYKVRFHRHQKLVNQRWQG</sequence>
<evidence type="ECO:0000255" key="1">
    <source>
        <dbReference type="HAMAP-Rule" id="MF_00689"/>
    </source>
</evidence>
<evidence type="ECO:0000269" key="2">
    <source>
    </source>
</evidence>
<evidence type="ECO:0000303" key="3">
    <source>
    </source>
</evidence>
<evidence type="ECO:0000305" key="4"/>
<comment type="function">
    <text evidence="1 2">Functions in the N-end rule pathway of protein degradation where it conjugates Leu from its aminoacyl-tRNA to the N-termini of proteins containing an N-terminal aspartate or glutamate.</text>
</comment>
<comment type="catalytic activity">
    <reaction evidence="1 2">
        <text>N-terminal L-glutamyl-[protein] + L-leucyl-tRNA(Leu) = N-terminal L-leucyl-L-glutamyl-[protein] + tRNA(Leu) + H(+)</text>
        <dbReference type="Rhea" id="RHEA:50412"/>
        <dbReference type="Rhea" id="RHEA-COMP:9613"/>
        <dbReference type="Rhea" id="RHEA-COMP:9622"/>
        <dbReference type="Rhea" id="RHEA-COMP:12664"/>
        <dbReference type="Rhea" id="RHEA-COMP:12668"/>
        <dbReference type="ChEBI" id="CHEBI:15378"/>
        <dbReference type="ChEBI" id="CHEBI:64721"/>
        <dbReference type="ChEBI" id="CHEBI:78442"/>
        <dbReference type="ChEBI" id="CHEBI:78494"/>
        <dbReference type="ChEBI" id="CHEBI:133041"/>
        <dbReference type="EC" id="2.3.2.29"/>
    </reaction>
</comment>
<comment type="catalytic activity">
    <reaction evidence="1 2">
        <text>N-terminal L-aspartyl-[protein] + L-leucyl-tRNA(Leu) = N-terminal L-leucyl-L-aspartyl-[protein] + tRNA(Leu) + H(+)</text>
        <dbReference type="Rhea" id="RHEA:50420"/>
        <dbReference type="Rhea" id="RHEA-COMP:9613"/>
        <dbReference type="Rhea" id="RHEA-COMP:9622"/>
        <dbReference type="Rhea" id="RHEA-COMP:12669"/>
        <dbReference type="Rhea" id="RHEA-COMP:12674"/>
        <dbReference type="ChEBI" id="CHEBI:15378"/>
        <dbReference type="ChEBI" id="CHEBI:64720"/>
        <dbReference type="ChEBI" id="CHEBI:78442"/>
        <dbReference type="ChEBI" id="CHEBI:78494"/>
        <dbReference type="ChEBI" id="CHEBI:133042"/>
        <dbReference type="EC" id="2.3.2.29"/>
    </reaction>
</comment>
<comment type="subcellular location">
    <subcellularLocation>
        <location evidence="1 4">Cytoplasm</location>
    </subcellularLocation>
</comment>
<comment type="similarity">
    <text evidence="1 4">Belongs to the R-transferase family. Bpt subfamily.</text>
</comment>
<organism>
    <name type="scientific">Vibrio vulnificus (strain CMCP6)</name>
    <dbReference type="NCBI Taxonomy" id="216895"/>
    <lineage>
        <taxon>Bacteria</taxon>
        <taxon>Pseudomonadati</taxon>
        <taxon>Pseudomonadota</taxon>
        <taxon>Gammaproteobacteria</taxon>
        <taxon>Vibrionales</taxon>
        <taxon>Vibrionaceae</taxon>
        <taxon>Vibrio</taxon>
    </lineage>
</organism>
<name>BPT_VIBVU</name>
<feature type="chain" id="PRO_0000207256" description="Aspartate/glutamate leucyltransferase">
    <location>
        <begin position="1"/>
        <end position="232"/>
    </location>
</feature>
<feature type="mutagenesis site" description="Loss of activity." evidence="2">
    <original>C</original>
    <variation>S</variation>
    <location>
        <position position="18"/>
    </location>
</feature>
<feature type="mutagenesis site" description="Strong decrease in activity." evidence="2">
    <original>Y</original>
    <variation>F</variation>
    <location>
        <position position="58"/>
    </location>
</feature>
<feature type="mutagenesis site" description="Almost loss of activity." evidence="2">
    <original>Y</original>
    <variation>F</variation>
    <location>
        <position position="170"/>
    </location>
</feature>
<feature type="mutagenesis site" description="Almost loss of activity." evidence="2">
    <original>Y</original>
    <variation>F</variation>
    <location>
        <position position="205"/>
    </location>
</feature>